<gene>
    <name type="ORF">SPAC2E11.17</name>
    <name type="ORF">SPACUNK4.17</name>
</gene>
<comment type="subcellular location">
    <subcellularLocation>
        <location evidence="1">Cytoplasm</location>
    </subcellularLocation>
    <subcellularLocation>
        <location evidence="1">Nucleus</location>
    </subcellularLocation>
</comment>
<comment type="similarity">
    <text evidence="2">To S.pombe SpAC12C2.04.</text>
</comment>
<reference key="1">
    <citation type="journal article" date="2002" name="Nature">
        <title>The genome sequence of Schizosaccharomyces pombe.</title>
        <authorList>
            <person name="Wood V."/>
            <person name="Gwilliam R."/>
            <person name="Rajandream M.A."/>
            <person name="Lyne M.H."/>
            <person name="Lyne R."/>
            <person name="Stewart A."/>
            <person name="Sgouros J.G."/>
            <person name="Peat N."/>
            <person name="Hayles J."/>
            <person name="Baker S.G."/>
            <person name="Basham D."/>
            <person name="Bowman S."/>
            <person name="Brooks K."/>
            <person name="Brown D."/>
            <person name="Brown S."/>
            <person name="Chillingworth T."/>
            <person name="Churcher C.M."/>
            <person name="Collins M."/>
            <person name="Connor R."/>
            <person name="Cronin A."/>
            <person name="Davis P."/>
            <person name="Feltwell T."/>
            <person name="Fraser A."/>
            <person name="Gentles S."/>
            <person name="Goble A."/>
            <person name="Hamlin N."/>
            <person name="Harris D.E."/>
            <person name="Hidalgo J."/>
            <person name="Hodgson G."/>
            <person name="Holroyd S."/>
            <person name="Hornsby T."/>
            <person name="Howarth S."/>
            <person name="Huckle E.J."/>
            <person name="Hunt S."/>
            <person name="Jagels K."/>
            <person name="James K.D."/>
            <person name="Jones L."/>
            <person name="Jones M."/>
            <person name="Leather S."/>
            <person name="McDonald S."/>
            <person name="McLean J."/>
            <person name="Mooney P."/>
            <person name="Moule S."/>
            <person name="Mungall K.L."/>
            <person name="Murphy L.D."/>
            <person name="Niblett D."/>
            <person name="Odell C."/>
            <person name="Oliver K."/>
            <person name="O'Neil S."/>
            <person name="Pearson D."/>
            <person name="Quail M.A."/>
            <person name="Rabbinowitsch E."/>
            <person name="Rutherford K.M."/>
            <person name="Rutter S."/>
            <person name="Saunders D."/>
            <person name="Seeger K."/>
            <person name="Sharp S."/>
            <person name="Skelton J."/>
            <person name="Simmonds M.N."/>
            <person name="Squares R."/>
            <person name="Squares S."/>
            <person name="Stevens K."/>
            <person name="Taylor K."/>
            <person name="Taylor R.G."/>
            <person name="Tivey A."/>
            <person name="Walsh S.V."/>
            <person name="Warren T."/>
            <person name="Whitehead S."/>
            <person name="Woodward J.R."/>
            <person name="Volckaert G."/>
            <person name="Aert R."/>
            <person name="Robben J."/>
            <person name="Grymonprez B."/>
            <person name="Weltjens I."/>
            <person name="Vanstreels E."/>
            <person name="Rieger M."/>
            <person name="Schaefer M."/>
            <person name="Mueller-Auer S."/>
            <person name="Gabel C."/>
            <person name="Fuchs M."/>
            <person name="Duesterhoeft A."/>
            <person name="Fritzc C."/>
            <person name="Holzer E."/>
            <person name="Moestl D."/>
            <person name="Hilbert H."/>
            <person name="Borzym K."/>
            <person name="Langer I."/>
            <person name="Beck A."/>
            <person name="Lehrach H."/>
            <person name="Reinhardt R."/>
            <person name="Pohl T.M."/>
            <person name="Eger P."/>
            <person name="Zimmermann W."/>
            <person name="Wedler H."/>
            <person name="Wambutt R."/>
            <person name="Purnelle B."/>
            <person name="Goffeau A."/>
            <person name="Cadieu E."/>
            <person name="Dreano S."/>
            <person name="Gloux S."/>
            <person name="Lelaure V."/>
            <person name="Mottier S."/>
            <person name="Galibert F."/>
            <person name="Aves S.J."/>
            <person name="Xiang Z."/>
            <person name="Hunt C."/>
            <person name="Moore K."/>
            <person name="Hurst S.M."/>
            <person name="Lucas M."/>
            <person name="Rochet M."/>
            <person name="Gaillardin C."/>
            <person name="Tallada V.A."/>
            <person name="Garzon A."/>
            <person name="Thode G."/>
            <person name="Daga R.R."/>
            <person name="Cruzado L."/>
            <person name="Jimenez J."/>
            <person name="Sanchez M."/>
            <person name="del Rey F."/>
            <person name="Benito J."/>
            <person name="Dominguez A."/>
            <person name="Revuelta J.L."/>
            <person name="Moreno S."/>
            <person name="Armstrong J."/>
            <person name="Forsburg S.L."/>
            <person name="Cerutti L."/>
            <person name="Lowe T."/>
            <person name="McCombie W.R."/>
            <person name="Paulsen I."/>
            <person name="Potashkin J."/>
            <person name="Shpakovski G.V."/>
            <person name="Ussery D."/>
            <person name="Barrell B.G."/>
            <person name="Nurse P."/>
        </authorList>
    </citation>
    <scope>NUCLEOTIDE SEQUENCE [LARGE SCALE GENOMIC DNA]</scope>
    <source>
        <strain>972 / ATCC 24843</strain>
    </source>
</reference>
<reference key="2">
    <citation type="journal article" date="2011" name="Science">
        <title>Comparative functional genomics of the fission yeasts.</title>
        <authorList>
            <person name="Rhind N."/>
            <person name="Chen Z."/>
            <person name="Yassour M."/>
            <person name="Thompson D.A."/>
            <person name="Haas B.J."/>
            <person name="Habib N."/>
            <person name="Wapinski I."/>
            <person name="Roy S."/>
            <person name="Lin M.F."/>
            <person name="Heiman D.I."/>
            <person name="Young S.K."/>
            <person name="Furuya K."/>
            <person name="Guo Y."/>
            <person name="Pidoux A."/>
            <person name="Chen H.M."/>
            <person name="Robbertse B."/>
            <person name="Goldberg J.M."/>
            <person name="Aoki K."/>
            <person name="Bayne E.H."/>
            <person name="Berlin A.M."/>
            <person name="Desjardins C.A."/>
            <person name="Dobbs E."/>
            <person name="Dukaj L."/>
            <person name="Fan L."/>
            <person name="FitzGerald M.G."/>
            <person name="French C."/>
            <person name="Gujja S."/>
            <person name="Hansen K."/>
            <person name="Keifenheim D."/>
            <person name="Levin J.Z."/>
            <person name="Mosher R.A."/>
            <person name="Mueller C.A."/>
            <person name="Pfiffner J."/>
            <person name="Priest M."/>
            <person name="Russ C."/>
            <person name="Smialowska A."/>
            <person name="Swoboda P."/>
            <person name="Sykes S.M."/>
            <person name="Vaughn M."/>
            <person name="Vengrova S."/>
            <person name="Yoder R."/>
            <person name="Zeng Q."/>
            <person name="Allshire R."/>
            <person name="Baulcombe D."/>
            <person name="Birren B.W."/>
            <person name="Brown W."/>
            <person name="Ekwall K."/>
            <person name="Kellis M."/>
            <person name="Leatherwood J."/>
            <person name="Levin H."/>
            <person name="Margalit H."/>
            <person name="Martienssen R."/>
            <person name="Nieduszynski C.A."/>
            <person name="Spatafora J.W."/>
            <person name="Friedman N."/>
            <person name="Dalgaard J.Z."/>
            <person name="Baumann P."/>
            <person name="Niki H."/>
            <person name="Regev A."/>
            <person name="Nusbaum C."/>
        </authorList>
    </citation>
    <scope>REVISION OF GENE MODEL</scope>
</reference>
<reference key="3">
    <citation type="journal article" date="2006" name="Nat. Biotechnol.">
        <title>ORFeome cloning and global analysis of protein localization in the fission yeast Schizosaccharomyces pombe.</title>
        <authorList>
            <person name="Matsuyama A."/>
            <person name="Arai R."/>
            <person name="Yashiroda Y."/>
            <person name="Shirai A."/>
            <person name="Kamata A."/>
            <person name="Sekido S."/>
            <person name="Kobayashi Y."/>
            <person name="Hashimoto A."/>
            <person name="Hamamoto M."/>
            <person name="Hiraoka Y."/>
            <person name="Horinouchi S."/>
            <person name="Yoshida M."/>
        </authorList>
    </citation>
    <scope>SUBCELLULAR LOCATION [LARGE SCALE ANALYSIS]</scope>
</reference>
<feature type="chain" id="PRO_0000116714" description="Uncharacterized protein UNK4.17">
    <location>
        <begin position="1"/>
        <end position="406"/>
    </location>
</feature>
<accession>O14082</accession>
<sequence length="406" mass="45756">MMQNIKDEAYKTYQNVKDEISSHLPQSAPEPTGPPFKCAIFGCGGINFGTAEGPWNNSQKLELVLGHRLQVVALLSPHKSSHERVLKQKAETEYASSYANTREFYSADEYLEYLDSHPEEKPDAYIIGIPPETHGSTQKGADLELAILKRFPDASLFIEKPISAAPVEDAFAVARRLPSESVISVGYMLRYLKTVQKAKEIIKEKNLKVVSTVAKYNSAYIHNSKKFWWIMSESGGPVVEQGTHFCDLSRYFGGDVEIDSIKVNRVEWDDPSGKLNAMPVDEKTIPPEERIPRFTAASWKYKDGGVGAFTHNITLQGAKYDTCIEVQADGYYLRIVDLYEEPVLYVRSPDSDEEKVYKYPNDDPYYSEFKIFLDAAEGKGDKNLIHSDFLDAVKTYELTKAITEAK</sequence>
<evidence type="ECO:0000269" key="1">
    <source>
    </source>
</evidence>
<evidence type="ECO:0000305" key="2"/>
<dbReference type="EMBL" id="CU329670">
    <property type="protein sequence ID" value="CAA20147.2"/>
    <property type="molecule type" value="Genomic_DNA"/>
</dbReference>
<dbReference type="PIR" id="T41712">
    <property type="entry name" value="T41712"/>
</dbReference>
<dbReference type="RefSeq" id="NP_593960.2">
    <property type="nucleotide sequence ID" value="NM_001019387.2"/>
</dbReference>
<dbReference type="SMR" id="O14082"/>
<dbReference type="BioGRID" id="278835">
    <property type="interactions" value="5"/>
</dbReference>
<dbReference type="STRING" id="284812.O14082"/>
<dbReference type="iPTMnet" id="O14082"/>
<dbReference type="PaxDb" id="4896-SPACUNK4.17.1"/>
<dbReference type="EnsemblFungi" id="SPACUNK4.17.1">
    <property type="protein sequence ID" value="SPACUNK4.17.1:pep"/>
    <property type="gene ID" value="SPACUNK4.17"/>
</dbReference>
<dbReference type="KEGG" id="spo:2542371"/>
<dbReference type="PomBase" id="SPACUNK4.17"/>
<dbReference type="VEuPathDB" id="FungiDB:SPACUNK4.17"/>
<dbReference type="eggNOG" id="ENOG502QUVQ">
    <property type="taxonomic scope" value="Eukaryota"/>
</dbReference>
<dbReference type="HOGENOM" id="CLU_039338_0_0_1"/>
<dbReference type="InParanoid" id="O14082"/>
<dbReference type="OMA" id="WKYDSGA"/>
<dbReference type="PRO" id="PR:O14082"/>
<dbReference type="Proteomes" id="UP000002485">
    <property type="component" value="Chromosome I"/>
</dbReference>
<dbReference type="GO" id="GO:0005829">
    <property type="term" value="C:cytosol"/>
    <property type="evidence" value="ECO:0007005"/>
    <property type="project" value="PomBase"/>
</dbReference>
<dbReference type="GO" id="GO:0005634">
    <property type="term" value="C:nucleus"/>
    <property type="evidence" value="ECO:0007005"/>
    <property type="project" value="PomBase"/>
</dbReference>
<dbReference type="GO" id="GO:0000166">
    <property type="term" value="F:nucleotide binding"/>
    <property type="evidence" value="ECO:0007669"/>
    <property type="project" value="InterPro"/>
</dbReference>
<dbReference type="FunFam" id="3.30.360.10:FF:000103">
    <property type="entry name" value="Uncharacterized protein C12C2.04"/>
    <property type="match status" value="1"/>
</dbReference>
<dbReference type="Gene3D" id="3.30.360.10">
    <property type="entry name" value="Dihydrodipicolinate Reductase, domain 2"/>
    <property type="match status" value="1"/>
</dbReference>
<dbReference type="Gene3D" id="3.40.50.720">
    <property type="entry name" value="NAD(P)-binding Rossmann-like Domain"/>
    <property type="match status" value="1"/>
</dbReference>
<dbReference type="InterPro" id="IPR000683">
    <property type="entry name" value="Gfo/Idh/MocA-like_OxRdtase_N"/>
</dbReference>
<dbReference type="InterPro" id="IPR052515">
    <property type="entry name" value="Gfo/Idh/MocA_Oxidoreductase"/>
</dbReference>
<dbReference type="InterPro" id="IPR036291">
    <property type="entry name" value="NAD(P)-bd_dom_sf"/>
</dbReference>
<dbReference type="InterPro" id="IPR013944">
    <property type="entry name" value="OxRdtase_put_C"/>
</dbReference>
<dbReference type="PANTHER" id="PTHR43249:SF1">
    <property type="entry name" value="D-GLUCOSIDE 3-DEHYDROGENASE"/>
    <property type="match status" value="1"/>
</dbReference>
<dbReference type="PANTHER" id="PTHR43249">
    <property type="entry name" value="UDP-N-ACETYL-2-AMINO-2-DEOXY-D-GLUCURONATE OXIDASE"/>
    <property type="match status" value="1"/>
</dbReference>
<dbReference type="Pfam" id="PF01408">
    <property type="entry name" value="GFO_IDH_MocA"/>
    <property type="match status" value="1"/>
</dbReference>
<dbReference type="Pfam" id="PF08635">
    <property type="entry name" value="ox_reductase_C"/>
    <property type="match status" value="1"/>
</dbReference>
<dbReference type="SUPFAM" id="SSF55347">
    <property type="entry name" value="Glyceraldehyde-3-phosphate dehydrogenase-like, C-terminal domain"/>
    <property type="match status" value="1"/>
</dbReference>
<dbReference type="SUPFAM" id="SSF51735">
    <property type="entry name" value="NAD(P)-binding Rossmann-fold domains"/>
    <property type="match status" value="1"/>
</dbReference>
<name>YEAH_SCHPO</name>
<proteinExistence type="predicted"/>
<organism>
    <name type="scientific">Schizosaccharomyces pombe (strain 972 / ATCC 24843)</name>
    <name type="common">Fission yeast</name>
    <dbReference type="NCBI Taxonomy" id="284812"/>
    <lineage>
        <taxon>Eukaryota</taxon>
        <taxon>Fungi</taxon>
        <taxon>Dikarya</taxon>
        <taxon>Ascomycota</taxon>
        <taxon>Taphrinomycotina</taxon>
        <taxon>Schizosaccharomycetes</taxon>
        <taxon>Schizosaccharomycetales</taxon>
        <taxon>Schizosaccharomycetaceae</taxon>
        <taxon>Schizosaccharomyces</taxon>
    </lineage>
</organism>
<protein>
    <recommendedName>
        <fullName>Uncharacterized protein UNK4.17</fullName>
    </recommendedName>
</protein>
<keyword id="KW-0963">Cytoplasm</keyword>
<keyword id="KW-0539">Nucleus</keyword>
<keyword id="KW-1185">Reference proteome</keyword>